<organism>
    <name type="scientific">Mycobacterium tuberculosis (strain ATCC 25618 / H37Rv)</name>
    <dbReference type="NCBI Taxonomy" id="83332"/>
    <lineage>
        <taxon>Bacteria</taxon>
        <taxon>Bacillati</taxon>
        <taxon>Actinomycetota</taxon>
        <taxon>Actinomycetes</taxon>
        <taxon>Mycobacteriales</taxon>
        <taxon>Mycobacteriaceae</taxon>
        <taxon>Mycobacterium</taxon>
        <taxon>Mycobacterium tuberculosis complex</taxon>
    </lineage>
</organism>
<gene>
    <name type="ordered locus">Rv2628</name>
</gene>
<feature type="chain" id="PRO_0000393358" description="Putative uncharacterized protein Rv2628">
    <location>
        <begin position="1"/>
        <end position="120"/>
    </location>
</feature>
<comment type="induction">
    <text evidence="1 2 4 5">A member of the dormancy regulon. Induced in response to reduced oxygen tension (hypoxia), low levels of nitric oxide (NO) and carbon monoxide (CO). It is hoped that this regulon will give insight into the latent, or dormant phase of infection.</text>
</comment>
<comment type="biotechnology">
    <text evidence="3 6">Has strong T-cell and IFN-gamma inducing capacity in human tuberculin skin test positive patients, indicating this might be a good vaccine candidate.</text>
</comment>
<reference key="1">
    <citation type="journal article" date="1998" name="Nature">
        <title>Deciphering the biology of Mycobacterium tuberculosis from the complete genome sequence.</title>
        <authorList>
            <person name="Cole S.T."/>
            <person name="Brosch R."/>
            <person name="Parkhill J."/>
            <person name="Garnier T."/>
            <person name="Churcher C.M."/>
            <person name="Harris D.E."/>
            <person name="Gordon S.V."/>
            <person name="Eiglmeier K."/>
            <person name="Gas S."/>
            <person name="Barry C.E. III"/>
            <person name="Tekaia F."/>
            <person name="Badcock K."/>
            <person name="Basham D."/>
            <person name="Brown D."/>
            <person name="Chillingworth T."/>
            <person name="Connor R."/>
            <person name="Davies R.M."/>
            <person name="Devlin K."/>
            <person name="Feltwell T."/>
            <person name="Gentles S."/>
            <person name="Hamlin N."/>
            <person name="Holroyd S."/>
            <person name="Hornsby T."/>
            <person name="Jagels K."/>
            <person name="Krogh A."/>
            <person name="McLean J."/>
            <person name="Moule S."/>
            <person name="Murphy L.D."/>
            <person name="Oliver S."/>
            <person name="Osborne J."/>
            <person name="Quail M.A."/>
            <person name="Rajandream M.A."/>
            <person name="Rogers J."/>
            <person name="Rutter S."/>
            <person name="Seeger K."/>
            <person name="Skelton S."/>
            <person name="Squares S."/>
            <person name="Squares R."/>
            <person name="Sulston J.E."/>
            <person name="Taylor K."/>
            <person name="Whitehead S."/>
            <person name="Barrell B.G."/>
        </authorList>
    </citation>
    <scope>NUCLEOTIDE SEQUENCE [LARGE SCALE GENOMIC DNA]</scope>
    <source>
        <strain>ATCC 25618 / H37Rv</strain>
    </source>
</reference>
<reference key="2">
    <citation type="journal article" date="2001" name="Proc. Natl. Acad. Sci. U.S.A.">
        <title>Regulation of the Mycobacterium tuberculosis hypoxic response gene encoding alpha -crystallin.</title>
        <authorList>
            <person name="Sherman D.R."/>
            <person name="Voskuil M."/>
            <person name="Schnappinger D."/>
            <person name="Liao R."/>
            <person name="Harrell M.I."/>
            <person name="Schoolnik G.K."/>
        </authorList>
    </citation>
    <scope>INDUCTION BY HYPOXIA</scope>
    <source>
        <strain>ATCC 25618 / H37Rv</strain>
    </source>
</reference>
<reference key="3">
    <citation type="journal article" date="2003" name="J. Exp. Med.">
        <title>Inhibition of respiration by nitric oxide induces a Mycobacterium tuberculosis dormancy program.</title>
        <authorList>
            <person name="Voskuil M.I."/>
            <person name="Schnappinger D."/>
            <person name="Visconti K.C."/>
            <person name="Harrell M.I."/>
            <person name="Dolganov G.M."/>
            <person name="Sherman D.R."/>
            <person name="Schoolnik G.K."/>
        </authorList>
    </citation>
    <scope>INDUCTION BY NITRIC OXIDE (NO) AND BY HYPOXIA</scope>
    <scope>DORMANCY REGULON</scope>
    <source>
        <strain>ATCC 25618 / H37Rv</strain>
    </source>
</reference>
<reference key="4">
    <citation type="journal article" date="2006" name="Microbes Infect.">
        <title>Human T-cell responses to 25 novel antigens encoded by genes of the dormancy regulon of Mycobacterium tuberculosis.</title>
        <authorList>
            <person name="Leyten E.M."/>
            <person name="Lin M.Y."/>
            <person name="Franken K.L."/>
            <person name="Friggen A.H."/>
            <person name="Prins C."/>
            <person name="van Meijgaarden K.E."/>
            <person name="Voskuil M.I."/>
            <person name="Weldingh K."/>
            <person name="Andersen P."/>
            <person name="Schoolnik G.K."/>
            <person name="Arend S.M."/>
            <person name="Ottenhoff T.H."/>
            <person name="Klein M.R."/>
        </authorList>
    </citation>
    <scope>BIOTECHNOLOGY</scope>
</reference>
<reference key="5">
    <citation type="journal article" date="2008" name="Cell Host Microbe">
        <title>Mycobacterium tuberculosis senses host-derived carbon monoxide during macrophage infection.</title>
        <authorList>
            <person name="Shiloh M.U."/>
            <person name="Manzanillo P."/>
            <person name="Cox J.S."/>
        </authorList>
    </citation>
    <scope>INDUCTION BY CARBON MONOXIDE (CO)</scope>
    <source>
        <strain>ATCC 35801 / TMC 107 / Erdman</strain>
    </source>
</reference>
<reference key="6">
    <citation type="journal article" date="2008" name="J. Biol. Chem.">
        <title>Heme oxygenase-1-derived carbon monoxide induces the Mycobacterium tuberculosis dormancy regulon.</title>
        <authorList>
            <person name="Kumar A."/>
            <person name="Deshane J.S."/>
            <person name="Crossman D.K."/>
            <person name="Bolisetty S."/>
            <person name="Yan B.S."/>
            <person name="Kramnik I."/>
            <person name="Agarwal A."/>
            <person name="Steyn A.J."/>
        </authorList>
    </citation>
    <scope>INDUCTION BY CARBON MONOXIDE (CO)</scope>
    <scope>DORMANCY REGULON</scope>
    <source>
        <strain>ATCC 25618 / H37Rv</strain>
    </source>
</reference>
<reference key="7">
    <citation type="journal article" date="2010" name="Eur. Respir. J.">
        <title>Response to Rv2628 latency antigen associates with cured tuberculosis and remote infection.</title>
        <authorList>
            <person name="Goletti D."/>
            <person name="Butera O."/>
            <person name="Vanini V."/>
            <person name="Lauria F.N."/>
            <person name="Lange C."/>
            <person name="Franken K.L."/>
            <person name="Angeletti C."/>
            <person name="Ottenhoff T.H."/>
            <person name="Girardi E."/>
        </authorList>
    </citation>
    <scope>BIOTECHNOLOGY</scope>
</reference>
<proteinExistence type="evidence at protein level"/>
<evidence type="ECO:0000269" key="1">
    <source>
    </source>
</evidence>
<evidence type="ECO:0000269" key="2">
    <source>
    </source>
</evidence>
<evidence type="ECO:0000269" key="3">
    <source>
    </source>
</evidence>
<evidence type="ECO:0000269" key="4">
    <source>
    </source>
</evidence>
<evidence type="ECO:0000269" key="5">
    <source>
    </source>
</evidence>
<evidence type="ECO:0000269" key="6">
    <source>
    </source>
</evidence>
<protein>
    <recommendedName>
        <fullName>Putative uncharacterized protein Rv2628</fullName>
    </recommendedName>
</protein>
<keyword id="KW-1185">Reference proteome</keyword>
<dbReference type="EMBL" id="AL123456">
    <property type="protein sequence ID" value="CCP45426.1"/>
    <property type="molecule type" value="Genomic_DNA"/>
</dbReference>
<dbReference type="PIR" id="C70573">
    <property type="entry name" value="C70573"/>
</dbReference>
<dbReference type="RefSeq" id="NP_217144.1">
    <property type="nucleotide sequence ID" value="NC_000962.3"/>
</dbReference>
<dbReference type="RefSeq" id="WP_003899403.1">
    <property type="nucleotide sequence ID" value="NC_000962.3"/>
</dbReference>
<dbReference type="STRING" id="83332.Rv2628"/>
<dbReference type="PaxDb" id="83332-Rv2628"/>
<dbReference type="DNASU" id="888566"/>
<dbReference type="GeneID" id="888566"/>
<dbReference type="KEGG" id="mtu:Rv2628"/>
<dbReference type="KEGG" id="mtv:RVBD_2628"/>
<dbReference type="PATRIC" id="fig|83332.111.peg.2932"/>
<dbReference type="TubercuList" id="Rv2628"/>
<dbReference type="eggNOG" id="ENOG5031T8Z">
    <property type="taxonomic scope" value="Bacteria"/>
</dbReference>
<dbReference type="InParanoid" id="P9WL65"/>
<dbReference type="OrthoDB" id="4736258at2"/>
<dbReference type="Proteomes" id="UP000001584">
    <property type="component" value="Chromosome"/>
</dbReference>
<accession>P9WL65</accession>
<accession>L0TAF6</accession>
<accession>O06184</accession>
<accession>Q7D6V2</accession>
<sequence length="120" mass="13129">MSTQRPRHSGIRAVGPYAWAGRCGRIGRWGVHQEAMMNLAIWHPRKVQSATIYQVTDRSHDGRTARVPGDEITSTVSGWLSELGTQSPLADELARAVRIGDWPAAYAIGEHLSVEIAVAV</sequence>
<name>Y2628_MYCTU</name>